<dbReference type="EMBL" id="AC093599">
    <property type="status" value="NOT_ANNOTATED_CDS"/>
    <property type="molecule type" value="Genomic_DNA"/>
</dbReference>
<dbReference type="EMBL" id="AB051514">
    <property type="protein sequence ID" value="BAB21818.1"/>
    <property type="molecule type" value="mRNA"/>
</dbReference>
<dbReference type="CCDS" id="CCDS34081.1"/>
<dbReference type="RefSeq" id="NP_001358045.1">
    <property type="nucleotide sequence ID" value="NM_001371116.1"/>
</dbReference>
<dbReference type="RefSeq" id="NP_203751.2">
    <property type="nucleotide sequence ID" value="NM_033393.3"/>
</dbReference>
<dbReference type="RefSeq" id="XP_005263376.1">
    <property type="nucleotide sequence ID" value="XM_005263319.3"/>
</dbReference>
<dbReference type="RefSeq" id="XP_006714456.1">
    <property type="nucleotide sequence ID" value="XM_006714393.3"/>
</dbReference>
<dbReference type="RefSeq" id="XP_011530690.1">
    <property type="nucleotide sequence ID" value="XM_011532388.1"/>
</dbReference>
<dbReference type="RefSeq" id="XP_011530691.1">
    <property type="nucleotide sequence ID" value="XM_011532389.2"/>
</dbReference>
<dbReference type="RefSeq" id="XP_047272291.1">
    <property type="nucleotide sequence ID" value="XM_047416335.1"/>
</dbReference>
<dbReference type="RefSeq" id="XP_047272292.1">
    <property type="nucleotide sequence ID" value="XM_047416336.1"/>
</dbReference>
<dbReference type="RefSeq" id="XP_054207109.1">
    <property type="nucleotide sequence ID" value="XM_054351134.1"/>
</dbReference>
<dbReference type="RefSeq" id="XP_054207110.1">
    <property type="nucleotide sequence ID" value="XM_054351135.1"/>
</dbReference>
<dbReference type="RefSeq" id="XP_054207111.1">
    <property type="nucleotide sequence ID" value="XM_054351136.1"/>
</dbReference>
<dbReference type="SMR" id="Q9C0D6"/>
<dbReference type="BioGRID" id="124546">
    <property type="interactions" value="6"/>
</dbReference>
<dbReference type="FunCoup" id="Q9C0D6">
    <property type="interactions" value="29"/>
</dbReference>
<dbReference type="IntAct" id="Q9C0D6">
    <property type="interactions" value="2"/>
</dbReference>
<dbReference type="STRING" id="9606.ENSP00000427567"/>
<dbReference type="iPTMnet" id="Q9C0D6"/>
<dbReference type="PhosphoSitePlus" id="Q9C0D6"/>
<dbReference type="BioMuta" id="FHDC1"/>
<dbReference type="DMDM" id="166977313"/>
<dbReference type="jPOST" id="Q9C0D6"/>
<dbReference type="MassIVE" id="Q9C0D6"/>
<dbReference type="PaxDb" id="9606-ENSP00000427567"/>
<dbReference type="PeptideAtlas" id="Q9C0D6"/>
<dbReference type="ProteomicsDB" id="80016"/>
<dbReference type="Antibodypedia" id="16653">
    <property type="antibodies" value="8 antibodies from 7 providers"/>
</dbReference>
<dbReference type="DNASU" id="85462"/>
<dbReference type="Ensembl" id="ENST00000511601.6">
    <property type="protein sequence ID" value="ENSP00000427567.1"/>
    <property type="gene ID" value="ENSG00000137460.10"/>
</dbReference>
<dbReference type="GeneID" id="85462"/>
<dbReference type="KEGG" id="hsa:85462"/>
<dbReference type="MANE-Select" id="ENST00000511601.6">
    <property type="protein sequence ID" value="ENSP00000427567.1"/>
    <property type="RefSeq nucleotide sequence ID" value="NM_001371116.1"/>
    <property type="RefSeq protein sequence ID" value="NP_001358045.1"/>
</dbReference>
<dbReference type="UCSC" id="uc003inf.2">
    <property type="organism name" value="human"/>
</dbReference>
<dbReference type="AGR" id="HGNC:29363"/>
<dbReference type="CTD" id="85462"/>
<dbReference type="DisGeNET" id="85462"/>
<dbReference type="GeneCards" id="FHDC1"/>
<dbReference type="HGNC" id="HGNC:29363">
    <property type="gene designation" value="FHDC1"/>
</dbReference>
<dbReference type="HPA" id="ENSG00000137460">
    <property type="expression patterns" value="Tissue enhanced (bone marrow, parathyroid gland, thyroid gland)"/>
</dbReference>
<dbReference type="MIM" id="620268">
    <property type="type" value="gene"/>
</dbReference>
<dbReference type="neXtProt" id="NX_Q9C0D6"/>
<dbReference type="OpenTargets" id="ENSG00000137460"/>
<dbReference type="PharmGKB" id="PA162388490"/>
<dbReference type="VEuPathDB" id="HostDB:ENSG00000137460"/>
<dbReference type="eggNOG" id="KOG1922">
    <property type="taxonomic scope" value="Eukaryota"/>
</dbReference>
<dbReference type="GeneTree" id="ENSGT00940000155128"/>
<dbReference type="HOGENOM" id="CLU_009023_0_0_1"/>
<dbReference type="InParanoid" id="Q9C0D6"/>
<dbReference type="OMA" id="LECWKQE"/>
<dbReference type="OrthoDB" id="26518at2759"/>
<dbReference type="PAN-GO" id="Q9C0D6">
    <property type="GO annotations" value="2 GO annotations based on evolutionary models"/>
</dbReference>
<dbReference type="PhylomeDB" id="Q9C0D6"/>
<dbReference type="TreeFam" id="TF324020"/>
<dbReference type="PathwayCommons" id="Q9C0D6"/>
<dbReference type="SignaLink" id="Q9C0D6"/>
<dbReference type="BioGRID-ORCS" id="85462">
    <property type="hits" value="9 hits in 1155 CRISPR screens"/>
</dbReference>
<dbReference type="ChiTaRS" id="FHDC1">
    <property type="organism name" value="human"/>
</dbReference>
<dbReference type="GenomeRNAi" id="85462"/>
<dbReference type="Pharos" id="Q9C0D6">
    <property type="development level" value="Tbio"/>
</dbReference>
<dbReference type="PRO" id="PR:Q9C0D6"/>
<dbReference type="Proteomes" id="UP000005640">
    <property type="component" value="Chromosome 4"/>
</dbReference>
<dbReference type="RNAct" id="Q9C0D6">
    <property type="molecule type" value="protein"/>
</dbReference>
<dbReference type="Bgee" id="ENSG00000137460">
    <property type="expression patterns" value="Expressed in ileal mucosa and 152 other cell types or tissues"/>
</dbReference>
<dbReference type="GO" id="GO:0005884">
    <property type="term" value="C:actin filament"/>
    <property type="evidence" value="ECO:0000318"/>
    <property type="project" value="GO_Central"/>
</dbReference>
<dbReference type="GO" id="GO:0005929">
    <property type="term" value="C:cilium"/>
    <property type="evidence" value="ECO:0000314"/>
    <property type="project" value="UniProtKB"/>
</dbReference>
<dbReference type="GO" id="GO:0005881">
    <property type="term" value="C:cytoplasmic microtubule"/>
    <property type="evidence" value="ECO:0000250"/>
    <property type="project" value="UniProtKB"/>
</dbReference>
<dbReference type="GO" id="GO:0005794">
    <property type="term" value="C:Golgi apparatus"/>
    <property type="evidence" value="ECO:0000250"/>
    <property type="project" value="UniProtKB"/>
</dbReference>
<dbReference type="GO" id="GO:0005874">
    <property type="term" value="C:microtubule"/>
    <property type="evidence" value="ECO:0000314"/>
    <property type="project" value="UniProtKB"/>
</dbReference>
<dbReference type="GO" id="GO:0003779">
    <property type="term" value="F:actin binding"/>
    <property type="evidence" value="ECO:0000250"/>
    <property type="project" value="UniProtKB"/>
</dbReference>
<dbReference type="GO" id="GO:0008017">
    <property type="term" value="F:microtubule binding"/>
    <property type="evidence" value="ECO:0000250"/>
    <property type="project" value="UniProtKB"/>
</dbReference>
<dbReference type="GO" id="GO:0030041">
    <property type="term" value="P:actin filament polymerization"/>
    <property type="evidence" value="ECO:0000318"/>
    <property type="project" value="GO_Central"/>
</dbReference>
<dbReference type="GO" id="GO:0060271">
    <property type="term" value="P:cilium assembly"/>
    <property type="evidence" value="ECO:0000315"/>
    <property type="project" value="UniProtKB"/>
</dbReference>
<dbReference type="GO" id="GO:0090161">
    <property type="term" value="P:Golgi ribbon formation"/>
    <property type="evidence" value="ECO:0000315"/>
    <property type="project" value="UniProtKB"/>
</dbReference>
<dbReference type="GO" id="GO:0043149">
    <property type="term" value="P:stress fiber assembly"/>
    <property type="evidence" value="ECO:0000314"/>
    <property type="project" value="UniProtKB"/>
</dbReference>
<dbReference type="FunFam" id="1.20.58.2220:FF:000014">
    <property type="entry name" value="FH2 domain containing 1"/>
    <property type="match status" value="1"/>
</dbReference>
<dbReference type="Gene3D" id="1.20.58.2220">
    <property type="entry name" value="Formin, FH2 domain"/>
    <property type="match status" value="1"/>
</dbReference>
<dbReference type="InterPro" id="IPR015425">
    <property type="entry name" value="FH2_Formin"/>
</dbReference>
<dbReference type="InterPro" id="IPR042201">
    <property type="entry name" value="FH2_Formin_sf"/>
</dbReference>
<dbReference type="InterPro" id="IPR051412">
    <property type="entry name" value="Formin_Homology_Diaphanous_sf"/>
</dbReference>
<dbReference type="PANTHER" id="PTHR45691:SF1">
    <property type="entry name" value="FH2 DOMAIN-CONTAINING PROTEIN 1-RELATED"/>
    <property type="match status" value="1"/>
</dbReference>
<dbReference type="PANTHER" id="PTHR45691">
    <property type="entry name" value="PROTEIN DIAPHANOUS"/>
    <property type="match status" value="1"/>
</dbReference>
<dbReference type="Pfam" id="PF02181">
    <property type="entry name" value="FH2"/>
    <property type="match status" value="1"/>
</dbReference>
<dbReference type="SMART" id="SM00498">
    <property type="entry name" value="FH2"/>
    <property type="match status" value="1"/>
</dbReference>
<dbReference type="SUPFAM" id="SSF101447">
    <property type="entry name" value="Formin homology 2 domain (FH2 domain)"/>
    <property type="match status" value="1"/>
</dbReference>
<dbReference type="PROSITE" id="PS51444">
    <property type="entry name" value="FH2"/>
    <property type="match status" value="1"/>
</dbReference>
<accession>Q9C0D6</accession>
<evidence type="ECO:0000250" key="1">
    <source>
        <dbReference type="UniProtKB" id="Q3ULZ2"/>
    </source>
</evidence>
<evidence type="ECO:0000255" key="2">
    <source>
        <dbReference type="PROSITE-ProRule" id="PRU00774"/>
    </source>
</evidence>
<evidence type="ECO:0000256" key="3">
    <source>
        <dbReference type="SAM" id="MobiDB-lite"/>
    </source>
</evidence>
<evidence type="ECO:0000269" key="4">
    <source>
    </source>
</evidence>
<evidence type="ECO:0000269" key="5">
    <source>
    </source>
</evidence>
<evidence type="ECO:0000269" key="6">
    <source>
    </source>
</evidence>
<evidence type="ECO:0000269" key="7">
    <source>
    </source>
</evidence>
<evidence type="ECO:0000269" key="8">
    <source>
    </source>
</evidence>
<evidence type="ECO:0000303" key="9">
    <source>
    </source>
</evidence>
<evidence type="ECO:0007744" key="10">
    <source>
    </source>
</evidence>
<keyword id="KW-0009">Actin-binding</keyword>
<keyword id="KW-0966">Cell projection</keyword>
<keyword id="KW-0970">Cilium biogenesis/degradation</keyword>
<keyword id="KW-0333">Golgi apparatus</keyword>
<keyword id="KW-0493">Microtubule</keyword>
<keyword id="KW-0597">Phosphoprotein</keyword>
<keyword id="KW-1267">Proteomics identification</keyword>
<keyword id="KW-1185">Reference proteome</keyword>
<feature type="chain" id="PRO_0000317280" description="FH2 domain-containing protein 1">
    <location>
        <begin position="1"/>
        <end position="1143"/>
    </location>
</feature>
<feature type="domain" description="FH2" evidence="2">
    <location>
        <begin position="87"/>
        <end position="482"/>
    </location>
</feature>
<feature type="region of interest" description="Disordered" evidence="3">
    <location>
        <begin position="16"/>
        <end position="89"/>
    </location>
</feature>
<feature type="region of interest" description="Disordered" evidence="3">
    <location>
        <begin position="517"/>
        <end position="638"/>
    </location>
</feature>
<feature type="region of interest" description="Disordered" evidence="3">
    <location>
        <begin position="706"/>
        <end position="1143"/>
    </location>
</feature>
<feature type="region of interest" description="MTBD; microtubule-binding domain" evidence="5">
    <location>
        <begin position="960"/>
        <end position="1086"/>
    </location>
</feature>
<feature type="compositionally biased region" description="Pro residues" evidence="3">
    <location>
        <begin position="29"/>
        <end position="46"/>
    </location>
</feature>
<feature type="compositionally biased region" description="Pro residues" evidence="3">
    <location>
        <begin position="56"/>
        <end position="80"/>
    </location>
</feature>
<feature type="compositionally biased region" description="Low complexity" evidence="3">
    <location>
        <begin position="521"/>
        <end position="534"/>
    </location>
</feature>
<feature type="compositionally biased region" description="Low complexity" evidence="3">
    <location>
        <begin position="806"/>
        <end position="818"/>
    </location>
</feature>
<feature type="compositionally biased region" description="Basic and acidic residues" evidence="3">
    <location>
        <begin position="848"/>
        <end position="861"/>
    </location>
</feature>
<feature type="compositionally biased region" description="Polar residues" evidence="3">
    <location>
        <begin position="925"/>
        <end position="947"/>
    </location>
</feature>
<feature type="compositionally biased region" description="Low complexity" evidence="3">
    <location>
        <begin position="958"/>
        <end position="968"/>
    </location>
</feature>
<feature type="compositionally biased region" description="Basic and acidic residues" evidence="3">
    <location>
        <begin position="995"/>
        <end position="1018"/>
    </location>
</feature>
<feature type="compositionally biased region" description="Polar residues" evidence="3">
    <location>
        <begin position="1036"/>
        <end position="1046"/>
    </location>
</feature>
<feature type="compositionally biased region" description="Basic and acidic residues" evidence="3">
    <location>
        <begin position="1071"/>
        <end position="1080"/>
    </location>
</feature>
<feature type="compositionally biased region" description="Basic and acidic residues" evidence="3">
    <location>
        <begin position="1117"/>
        <end position="1130"/>
    </location>
</feature>
<feature type="modified residue" description="Phosphoserine" evidence="10">
    <location>
        <position position="500"/>
    </location>
</feature>
<feature type="modified residue" description="Phosphoserine" evidence="1">
    <location>
        <position position="650"/>
    </location>
</feature>
<feature type="modified residue" description="Phosphoserine" evidence="10">
    <location>
        <position position="660"/>
    </location>
</feature>
<feature type="modified residue" description="Phosphoserine" evidence="10">
    <location>
        <position position="664"/>
    </location>
</feature>
<feature type="sequence variant" id="VAR_069394" evidence="6">
    <original>L</original>
    <variation>F</variation>
    <location>
        <position position="297"/>
    </location>
</feature>
<feature type="sequence variant" id="VAR_050990" description="In dbSNP:rs3811833." evidence="4">
    <original>R</original>
    <variation>C</variation>
    <location>
        <position position="639"/>
    </location>
</feature>
<feature type="mutagenesis site" description="Loss of actin-binding and ability to induce Golgi ribbon formation. Induces a significant increase in average cilia length." evidence="7 8">
    <original>I</original>
    <variation>A</variation>
    <location>
        <position position="180"/>
    </location>
</feature>
<organism>
    <name type="scientific">Homo sapiens</name>
    <name type="common">Human</name>
    <dbReference type="NCBI Taxonomy" id="9606"/>
    <lineage>
        <taxon>Eukaryota</taxon>
        <taxon>Metazoa</taxon>
        <taxon>Chordata</taxon>
        <taxon>Craniata</taxon>
        <taxon>Vertebrata</taxon>
        <taxon>Euteleostomi</taxon>
        <taxon>Mammalia</taxon>
        <taxon>Eutheria</taxon>
        <taxon>Euarchontoglires</taxon>
        <taxon>Primates</taxon>
        <taxon>Haplorrhini</taxon>
        <taxon>Catarrhini</taxon>
        <taxon>Hominidae</taxon>
        <taxon>Homo</taxon>
    </lineage>
</organism>
<reference key="1">
    <citation type="journal article" date="2005" name="Nature">
        <title>Generation and annotation of the DNA sequences of human chromosomes 2 and 4.</title>
        <authorList>
            <person name="Hillier L.W."/>
            <person name="Graves T.A."/>
            <person name="Fulton R.S."/>
            <person name="Fulton L.A."/>
            <person name="Pepin K.H."/>
            <person name="Minx P."/>
            <person name="Wagner-McPherson C."/>
            <person name="Layman D."/>
            <person name="Wylie K."/>
            <person name="Sekhon M."/>
            <person name="Becker M.C."/>
            <person name="Fewell G.A."/>
            <person name="Delehaunty K.D."/>
            <person name="Miner T.L."/>
            <person name="Nash W.E."/>
            <person name="Kremitzki C."/>
            <person name="Oddy L."/>
            <person name="Du H."/>
            <person name="Sun H."/>
            <person name="Bradshaw-Cordum H."/>
            <person name="Ali J."/>
            <person name="Carter J."/>
            <person name="Cordes M."/>
            <person name="Harris A."/>
            <person name="Isak A."/>
            <person name="van Brunt A."/>
            <person name="Nguyen C."/>
            <person name="Du F."/>
            <person name="Courtney L."/>
            <person name="Kalicki J."/>
            <person name="Ozersky P."/>
            <person name="Abbott S."/>
            <person name="Armstrong J."/>
            <person name="Belter E.A."/>
            <person name="Caruso L."/>
            <person name="Cedroni M."/>
            <person name="Cotton M."/>
            <person name="Davidson T."/>
            <person name="Desai A."/>
            <person name="Elliott G."/>
            <person name="Erb T."/>
            <person name="Fronick C."/>
            <person name="Gaige T."/>
            <person name="Haakenson W."/>
            <person name="Haglund K."/>
            <person name="Holmes A."/>
            <person name="Harkins R."/>
            <person name="Kim K."/>
            <person name="Kruchowski S.S."/>
            <person name="Strong C.M."/>
            <person name="Grewal N."/>
            <person name="Goyea E."/>
            <person name="Hou S."/>
            <person name="Levy A."/>
            <person name="Martinka S."/>
            <person name="Mead K."/>
            <person name="McLellan M.D."/>
            <person name="Meyer R."/>
            <person name="Randall-Maher J."/>
            <person name="Tomlinson C."/>
            <person name="Dauphin-Kohlberg S."/>
            <person name="Kozlowicz-Reilly A."/>
            <person name="Shah N."/>
            <person name="Swearengen-Shahid S."/>
            <person name="Snider J."/>
            <person name="Strong J.T."/>
            <person name="Thompson J."/>
            <person name="Yoakum M."/>
            <person name="Leonard S."/>
            <person name="Pearman C."/>
            <person name="Trani L."/>
            <person name="Radionenko M."/>
            <person name="Waligorski J.E."/>
            <person name="Wang C."/>
            <person name="Rock S.M."/>
            <person name="Tin-Wollam A.-M."/>
            <person name="Maupin R."/>
            <person name="Latreille P."/>
            <person name="Wendl M.C."/>
            <person name="Yang S.-P."/>
            <person name="Pohl C."/>
            <person name="Wallis J.W."/>
            <person name="Spieth J."/>
            <person name="Bieri T.A."/>
            <person name="Berkowicz N."/>
            <person name="Nelson J.O."/>
            <person name="Osborne J."/>
            <person name="Ding L."/>
            <person name="Meyer R."/>
            <person name="Sabo A."/>
            <person name="Shotland Y."/>
            <person name="Sinha P."/>
            <person name="Wohldmann P.E."/>
            <person name="Cook L.L."/>
            <person name="Hickenbotham M.T."/>
            <person name="Eldred J."/>
            <person name="Williams D."/>
            <person name="Jones T.A."/>
            <person name="She X."/>
            <person name="Ciccarelli F.D."/>
            <person name="Izaurralde E."/>
            <person name="Taylor J."/>
            <person name="Schmutz J."/>
            <person name="Myers R.M."/>
            <person name="Cox D.R."/>
            <person name="Huang X."/>
            <person name="McPherson J.D."/>
            <person name="Mardis E.R."/>
            <person name="Clifton S.W."/>
            <person name="Warren W.C."/>
            <person name="Chinwalla A.T."/>
            <person name="Eddy S.R."/>
            <person name="Marra M.A."/>
            <person name="Ovcharenko I."/>
            <person name="Furey T.S."/>
            <person name="Miller W."/>
            <person name="Eichler E.E."/>
            <person name="Bork P."/>
            <person name="Suyama M."/>
            <person name="Torrents D."/>
            <person name="Waterston R.H."/>
            <person name="Wilson R.K."/>
        </authorList>
    </citation>
    <scope>NUCLEOTIDE SEQUENCE [LARGE SCALE GENOMIC DNA]</scope>
</reference>
<reference key="2">
    <citation type="journal article" date="2000" name="DNA Res.">
        <title>Prediction of the coding sequences of unidentified human genes. XIX. The complete sequences of 100 new cDNA clones from brain which code for large proteins in vitro.</title>
        <authorList>
            <person name="Nagase T."/>
            <person name="Kikuno R."/>
            <person name="Hattori A."/>
            <person name="Kondo Y."/>
            <person name="Okumura K."/>
            <person name="Ohara O."/>
        </authorList>
    </citation>
    <scope>NUCLEOTIDE SEQUENCE [LARGE SCALE MRNA] OF 14-1143</scope>
    <scope>VARIANT CYS-639</scope>
    <source>
        <tissue>Brain</tissue>
    </source>
</reference>
<reference key="3">
    <citation type="journal article" date="2008" name="Mol. Biol. Cell">
        <title>INF1 is a novel microtubule-associated formin.</title>
        <authorList>
            <person name="Young K.G."/>
            <person name="Thurston S.F."/>
            <person name="Copeland S."/>
            <person name="Smallwood C."/>
            <person name="Copeland J.W."/>
        </authorList>
    </citation>
    <scope>FUNCTION</scope>
    <scope>SUBCELLULAR LOCATION</scope>
    <scope>REGION MTBD</scope>
</reference>
<reference key="4">
    <citation type="journal article" date="2011" name="Sci. Signal.">
        <title>System-wide temporal characterization of the proteome and phosphoproteome of human embryonic stem cell differentiation.</title>
        <authorList>
            <person name="Rigbolt K.T."/>
            <person name="Prokhorova T.A."/>
            <person name="Akimov V."/>
            <person name="Henningsen J."/>
            <person name="Johansen P.T."/>
            <person name="Kratchmarova I."/>
            <person name="Kassem M."/>
            <person name="Mann M."/>
            <person name="Olsen J.V."/>
            <person name="Blagoev B."/>
        </authorList>
    </citation>
    <scope>PHOSPHORYLATION [LARGE SCALE ANALYSIS] AT SER-500; SER-660 AND SER-664</scope>
    <scope>IDENTIFICATION BY MASS SPECTROMETRY [LARGE SCALE ANALYSIS]</scope>
</reference>
<reference key="5">
    <citation type="journal article" date="2016" name="Mol. Biol. Cell">
        <title>Actin- and microtubule-dependent regulation of Golgi morphology by FHDC1.</title>
        <authorList>
            <person name="Copeland S.J."/>
            <person name="Thurston S.F."/>
            <person name="Copeland J.W."/>
        </authorList>
    </citation>
    <scope>FUNCTION</scope>
    <scope>MUTAGENESIS OF ILE-180</scope>
    <scope>DOMAINS FH2 AND MTBD</scope>
</reference>
<reference key="6">
    <citation type="journal article" date="2018" name="Mol. Biol. Cell">
        <title>Actin-dependent regulation of cilia length by the inverted formin FHDC1.</title>
        <authorList>
            <person name="Copeland S.J."/>
            <person name="McRae A."/>
            <person name="Guarguaglini G."/>
            <person name="Trinkle-Mulcahy L."/>
            <person name="Copeland J.W."/>
        </authorList>
    </citation>
    <scope>FUNCTION</scope>
    <scope>SUBCELLULAR LOCATION</scope>
    <scope>MUTAGENESIS OF ILE-180</scope>
</reference>
<reference key="7">
    <citation type="journal article" date="2012" name="N. Engl. J. Med.">
        <title>Diagnostic exome sequencing in persons with severe intellectual disability.</title>
        <authorList>
            <person name="de Ligt J."/>
            <person name="Willemsen M.H."/>
            <person name="van Bon B.W."/>
            <person name="Kleefstra T."/>
            <person name="Yntema H.G."/>
            <person name="Kroes T."/>
            <person name="Vulto-van Silfhout A.T."/>
            <person name="Koolen D.A."/>
            <person name="de Vries P."/>
            <person name="Gilissen C."/>
            <person name="del Rosario M."/>
            <person name="Hoischen A."/>
            <person name="Scheffer H."/>
            <person name="de Vries B.B."/>
            <person name="Brunner H.G."/>
            <person name="Veltman J.A."/>
            <person name="Vissers L.E."/>
        </authorList>
    </citation>
    <scope>VARIANT PHE-297</scope>
</reference>
<sequence length="1143" mass="124762">MHVMNCVSLVSDKENGNIATAPGFMIGQTPPPAPPPPPPPPPPSPPCSCSREECPSSPPPPPPPPLPGEPPIPPPPPGLPPTTHMNGYSHLGKKKRMRSFFWKTIPEEQVRGKTNIWTLAARQEHHYQIDTKTIEELFGQQEDTTKSSLPRRGRTLNSSFREAREEITILDAKRSMNIGIFLKQFKKSPRSIVEDIHQGKSEHYGSETLREFLKFLPESEEVKKLKAFSGDVSKLSLADSFLYGLIQVPNYSLRIEAMVLKKEFLPSCSSLYTDITVLRTAIKELMSCEELHSILHLVLQAGNIMNAGGYAGNAVGFKLSSLLKLADTKANKPGMNLLHFVAQEAQKKDTILLNFSEKLHHVQKTARLSLENTEAELHLLFVRTKSLKENIQRDGELCQQMEDFLQFAIEKLRELECWKQELQDEAYTLIDFFCEDKKTMKLDECFQIFRDFCTKFNKAVKDNHDREAQELRQLQRLKEQEQKQRSWATGELGAFGRSSSENDVELLTKKGAEGLLPFLHPRPISPSSPSYRPPNTRRSRLSLGPSADRELLTFLESSTGSPEEPNKFHSLPRSSPRQARPTIACLEPAEVRHQDSSFAHKPQASGGQEEAPNPPSAQAHQLAAAQPENHASAFPRARRQGVSVLRKRYSEPVSLGSAQSPPLSPLALGIKEHELVTGLAQFNLQGSQGMEETSQLTLSDFSPMELESVGHRGPQSLSASSSSLTPMGRDALGSLSPALEDGKAAPDEPGSAALGSVGSSDPENKDPRPLFCISDTTDCSLTLDCSEGTDSRPRGGDPEEGGEGDGSMSSGVGEMGDSQVSSNPTSSPPGEAPAPVSVDSEPSCKGGLPRDKPTKRKDVVAPKRGSLKEASPGASKPGSARRSQGAVAKSVRTLTASENESMRKVMPITKSSRGAGWRRPELSSRGPSQNPPSSTDTVWSRQNSVRRASTGAEEQRLPRGSSGSSSTRPGRDVPLQPRGSFKKPSAKPLRNLPRQKPEENKTCRAHSEGPESPKEEPKTPSVPSVPHELPRVPSFARNTVASSSRSMRTDLPPVAKAPGITRTVSQRQLRVKGDPEDAAPKDSSTLRRASSARAPKKRPESAEGPSANTEAPLKARGAGERASLRRKDSSRTTLGRILNPLRK</sequence>
<gene>
    <name type="primary">FHDC1</name>
    <name evidence="9" type="synonym">INF1</name>
    <name type="synonym">KIAA1727</name>
</gene>
<proteinExistence type="evidence at protein level"/>
<protein>
    <recommendedName>
        <fullName>FH2 domain-containing protein 1</fullName>
    </recommendedName>
    <alternativeName>
        <fullName evidence="9">Inverted formin-1</fullName>
    </alternativeName>
</protein>
<comment type="function">
    <text evidence="5 7 8">Microtubule-associated formin which regulates both actin and microtubule dynamics. Induces microtubule acetylation and stabilization and actin stress fiber formation (PubMed:18815276). Regulates Golgi ribbon formation (PubMed:26564798). Required for normal cilia assembly. Early in cilia assembly, may assist in the maturation and positioning of the centrosome/basal body, and once cilia assembly has initiated, may also promote cilia elongation by inhibiting disassembly (PubMed:29742020).</text>
</comment>
<comment type="subunit">
    <text evidence="1">Interacts with CEP170.</text>
</comment>
<comment type="subcellular location">
    <subcellularLocation>
        <location evidence="8">Cell projection</location>
        <location evidence="8">Cilium</location>
    </subcellularLocation>
    <subcellularLocation>
        <location evidence="1">Golgi apparatus</location>
    </subcellularLocation>
    <text evidence="5">Associates with microtubules.</text>
</comment>
<comment type="domain">
    <text evidence="7">The FH2 and MBD domains are essential for its function in regulating Golgi ribbon formation.</text>
</comment>
<name>FHDC1_HUMAN</name>